<accession>P28435</accession>
<comment type="function">
    <text evidence="1">RuBisCO catalyzes two reactions: the carboxylation of D-ribulose 1,5-bisphosphate, the primary event in carbon dioxide fixation, as well as the oxidative fragmentation of the pentose substrate in the photorespiration process. Both reactions occur simultaneously and in competition at the same active site.</text>
</comment>
<comment type="catalytic activity">
    <reaction evidence="1">
        <text>2 (2R)-3-phosphoglycerate + 2 H(+) = D-ribulose 1,5-bisphosphate + CO2 + H2O</text>
        <dbReference type="Rhea" id="RHEA:23124"/>
        <dbReference type="ChEBI" id="CHEBI:15377"/>
        <dbReference type="ChEBI" id="CHEBI:15378"/>
        <dbReference type="ChEBI" id="CHEBI:16526"/>
        <dbReference type="ChEBI" id="CHEBI:57870"/>
        <dbReference type="ChEBI" id="CHEBI:58272"/>
        <dbReference type="EC" id="4.1.1.39"/>
    </reaction>
</comment>
<comment type="catalytic activity">
    <reaction evidence="1">
        <text>D-ribulose 1,5-bisphosphate + O2 = 2-phosphoglycolate + (2R)-3-phosphoglycerate + 2 H(+)</text>
        <dbReference type="Rhea" id="RHEA:36631"/>
        <dbReference type="ChEBI" id="CHEBI:15378"/>
        <dbReference type="ChEBI" id="CHEBI:15379"/>
        <dbReference type="ChEBI" id="CHEBI:57870"/>
        <dbReference type="ChEBI" id="CHEBI:58033"/>
        <dbReference type="ChEBI" id="CHEBI:58272"/>
    </reaction>
</comment>
<comment type="cofactor">
    <cofactor evidence="1">
        <name>Mg(2+)</name>
        <dbReference type="ChEBI" id="CHEBI:18420"/>
    </cofactor>
    <text evidence="1">Binds 1 Mg(2+) ion per subunit.</text>
</comment>
<comment type="subunit">
    <text evidence="1">Heterohexadecamer of 8 large chains and 8 small chains; disulfide-linked. The disulfide link is formed within the large subunit homodimers.</text>
</comment>
<comment type="subcellular location">
    <subcellularLocation>
        <location>Plastid</location>
        <location>Chloroplast</location>
    </subcellularLocation>
</comment>
<comment type="PTM">
    <text evidence="1">The disulfide bond which can form in the large chain dimeric partners within the hexadecamer appears to be associated with oxidative stress and protein turnover.</text>
</comment>
<comment type="miscellaneous">
    <text evidence="1">The basic functional RuBisCO is composed of a large chain homodimer in a 'head-to-tail' conformation. In form I RuBisCO this homodimer is arranged in a barrel-like tetramer with the small subunits forming a tetrameric 'cap' on each end of the 'barrel'.</text>
</comment>
<comment type="similarity">
    <text evidence="1">Belongs to the RuBisCO large chain family. Type I subfamily.</text>
</comment>
<keyword id="KW-0113">Calvin cycle</keyword>
<keyword id="KW-0120">Carbon dioxide fixation</keyword>
<keyword id="KW-0150">Chloroplast</keyword>
<keyword id="KW-1015">Disulfide bond</keyword>
<keyword id="KW-0456">Lyase</keyword>
<keyword id="KW-0460">Magnesium</keyword>
<keyword id="KW-0479">Metal-binding</keyword>
<keyword id="KW-0488">Methylation</keyword>
<keyword id="KW-0503">Monooxygenase</keyword>
<keyword id="KW-0560">Oxidoreductase</keyword>
<keyword id="KW-0601">Photorespiration</keyword>
<keyword id="KW-0602">Photosynthesis</keyword>
<keyword id="KW-0934">Plastid</keyword>
<evidence type="ECO:0000255" key="1">
    <source>
        <dbReference type="HAMAP-Rule" id="MF_01338"/>
    </source>
</evidence>
<dbReference type="EC" id="4.1.1.39" evidence="1"/>
<dbReference type="EMBL" id="L01937">
    <property type="protein sequence ID" value="AAA68043.1"/>
    <property type="molecule type" value="Genomic_DNA"/>
</dbReference>
<dbReference type="SMR" id="P28435"/>
<dbReference type="GO" id="GO:0009507">
    <property type="term" value="C:chloroplast"/>
    <property type="evidence" value="ECO:0007669"/>
    <property type="project" value="UniProtKB-SubCell"/>
</dbReference>
<dbReference type="GO" id="GO:0000287">
    <property type="term" value="F:magnesium ion binding"/>
    <property type="evidence" value="ECO:0007669"/>
    <property type="project" value="InterPro"/>
</dbReference>
<dbReference type="GO" id="GO:0004497">
    <property type="term" value="F:monooxygenase activity"/>
    <property type="evidence" value="ECO:0007669"/>
    <property type="project" value="UniProtKB-KW"/>
</dbReference>
<dbReference type="GO" id="GO:0016984">
    <property type="term" value="F:ribulose-bisphosphate carboxylase activity"/>
    <property type="evidence" value="ECO:0007669"/>
    <property type="project" value="UniProtKB-EC"/>
</dbReference>
<dbReference type="GO" id="GO:0009853">
    <property type="term" value="P:photorespiration"/>
    <property type="evidence" value="ECO:0007669"/>
    <property type="project" value="UniProtKB-KW"/>
</dbReference>
<dbReference type="GO" id="GO:0019253">
    <property type="term" value="P:reductive pentose-phosphate cycle"/>
    <property type="evidence" value="ECO:0007669"/>
    <property type="project" value="UniProtKB-KW"/>
</dbReference>
<dbReference type="CDD" id="cd08212">
    <property type="entry name" value="RuBisCO_large_I"/>
    <property type="match status" value="1"/>
</dbReference>
<dbReference type="FunFam" id="3.20.20.110:FF:000001">
    <property type="entry name" value="Ribulose bisphosphate carboxylase large chain"/>
    <property type="match status" value="1"/>
</dbReference>
<dbReference type="FunFam" id="3.30.70.150:FF:000001">
    <property type="entry name" value="Ribulose bisphosphate carboxylase large chain"/>
    <property type="match status" value="1"/>
</dbReference>
<dbReference type="Gene3D" id="3.20.20.110">
    <property type="entry name" value="Ribulose bisphosphate carboxylase, large subunit, C-terminal domain"/>
    <property type="match status" value="1"/>
</dbReference>
<dbReference type="Gene3D" id="3.30.70.150">
    <property type="entry name" value="RuBisCO large subunit, N-terminal domain"/>
    <property type="match status" value="1"/>
</dbReference>
<dbReference type="HAMAP" id="MF_01338">
    <property type="entry name" value="RuBisCO_L_type1"/>
    <property type="match status" value="1"/>
</dbReference>
<dbReference type="InterPro" id="IPR033966">
    <property type="entry name" value="RuBisCO"/>
</dbReference>
<dbReference type="InterPro" id="IPR020878">
    <property type="entry name" value="RuBisCo_large_chain_AS"/>
</dbReference>
<dbReference type="InterPro" id="IPR000685">
    <property type="entry name" value="RuBisCO_lsu_C"/>
</dbReference>
<dbReference type="InterPro" id="IPR036376">
    <property type="entry name" value="RuBisCO_lsu_C_sf"/>
</dbReference>
<dbReference type="InterPro" id="IPR017443">
    <property type="entry name" value="RuBisCO_lsu_fd_N"/>
</dbReference>
<dbReference type="InterPro" id="IPR036422">
    <property type="entry name" value="RuBisCO_lsu_N_sf"/>
</dbReference>
<dbReference type="InterPro" id="IPR020888">
    <property type="entry name" value="RuBisCO_lsuI"/>
</dbReference>
<dbReference type="NCBIfam" id="NF003252">
    <property type="entry name" value="PRK04208.1"/>
    <property type="match status" value="1"/>
</dbReference>
<dbReference type="PANTHER" id="PTHR42704">
    <property type="entry name" value="RIBULOSE BISPHOSPHATE CARBOXYLASE"/>
    <property type="match status" value="1"/>
</dbReference>
<dbReference type="PANTHER" id="PTHR42704:SF15">
    <property type="entry name" value="RIBULOSE BISPHOSPHATE CARBOXYLASE LARGE CHAIN"/>
    <property type="match status" value="1"/>
</dbReference>
<dbReference type="Pfam" id="PF00016">
    <property type="entry name" value="RuBisCO_large"/>
    <property type="match status" value="1"/>
</dbReference>
<dbReference type="Pfam" id="PF02788">
    <property type="entry name" value="RuBisCO_large_N"/>
    <property type="match status" value="1"/>
</dbReference>
<dbReference type="SFLD" id="SFLDG01052">
    <property type="entry name" value="RuBisCO"/>
    <property type="match status" value="1"/>
</dbReference>
<dbReference type="SFLD" id="SFLDS00014">
    <property type="entry name" value="RuBisCO"/>
    <property type="match status" value="1"/>
</dbReference>
<dbReference type="SFLD" id="SFLDG00301">
    <property type="entry name" value="RuBisCO-like_proteins"/>
    <property type="match status" value="1"/>
</dbReference>
<dbReference type="SUPFAM" id="SSF51649">
    <property type="entry name" value="RuBisCo, C-terminal domain"/>
    <property type="match status" value="1"/>
</dbReference>
<dbReference type="SUPFAM" id="SSF54966">
    <property type="entry name" value="RuBisCO, large subunit, small (N-terminal) domain"/>
    <property type="match status" value="1"/>
</dbReference>
<dbReference type="PROSITE" id="PS00157">
    <property type="entry name" value="RUBISCO_LARGE"/>
    <property type="match status" value="1"/>
</dbReference>
<geneLocation type="chloroplast"/>
<sequence length="459" mass="51045">VGFKAGVKDYKLTYYTPDYETKDTDILAAFRVTPQPGVPPEEAGAAVAAESSTGTWTTVWTDGLTSLDRYKGRCYHIEPVAGEETQFIAYVAYPLDLFEEGSVTNMFTSIVGNVFGFKALRALRLEDLRIPTAYTKTFQGPPHGIQVERDKLNKYGRPLLGCTIKPKLGLSAKNYGRAVYECLRGGLDFTKDDENVNSQPFMRWRDRFLFCAEAIYKAQAETGEIKGHYLNATAGTCEDMMKRAVFARELGVPIVMHDYLTGGFTANTTLAHYCRDNGLLLHIHRAMHAVIDRQKNHGMHFRVLAKALRMSGGDHIHAGTVVGKLEGEREITLGFVDLLRDDFIEKDRSRGIYFTQDWVSLPGVLPVASGGIHVWHMPALTEIFGDDSVLQFGGGTLGHPWGNAPGAVANRVALEACVQARNEGRDLAREDNEIIREASKWSPELAAACEIWKEIKFEF</sequence>
<gene>
    <name evidence="1" type="primary">rbcL</name>
</gene>
<feature type="chain" id="PRO_0000062547" description="Ribulose bisphosphate carboxylase large chain">
    <location>
        <begin position="1" status="less than"/>
        <end position="459" status="greater than"/>
    </location>
</feature>
<feature type="active site" description="Proton acceptor" evidence="1">
    <location>
        <position position="165"/>
    </location>
</feature>
<feature type="active site" description="Proton acceptor" evidence="1">
    <location>
        <position position="284"/>
    </location>
</feature>
<feature type="binding site" description="in homodimeric partner" evidence="1">
    <location>
        <position position="113"/>
    </location>
    <ligand>
        <name>substrate</name>
    </ligand>
</feature>
<feature type="binding site" evidence="1">
    <location>
        <position position="163"/>
    </location>
    <ligand>
        <name>substrate</name>
    </ligand>
</feature>
<feature type="binding site" evidence="1">
    <location>
        <position position="167"/>
    </location>
    <ligand>
        <name>substrate</name>
    </ligand>
</feature>
<feature type="binding site" description="via carbamate group" evidence="1">
    <location>
        <position position="191"/>
    </location>
    <ligand>
        <name>Mg(2+)</name>
        <dbReference type="ChEBI" id="CHEBI:18420"/>
    </ligand>
</feature>
<feature type="binding site" evidence="1">
    <location>
        <position position="193"/>
    </location>
    <ligand>
        <name>Mg(2+)</name>
        <dbReference type="ChEBI" id="CHEBI:18420"/>
    </ligand>
</feature>
<feature type="binding site" evidence="1">
    <location>
        <position position="194"/>
    </location>
    <ligand>
        <name>Mg(2+)</name>
        <dbReference type="ChEBI" id="CHEBI:18420"/>
    </ligand>
</feature>
<feature type="binding site" evidence="1">
    <location>
        <position position="285"/>
    </location>
    <ligand>
        <name>substrate</name>
    </ligand>
</feature>
<feature type="binding site" evidence="1">
    <location>
        <position position="317"/>
    </location>
    <ligand>
        <name>substrate</name>
    </ligand>
</feature>
<feature type="binding site" evidence="1">
    <location>
        <position position="369"/>
    </location>
    <ligand>
        <name>substrate</name>
    </ligand>
</feature>
<feature type="site" description="Transition state stabilizer" evidence="1">
    <location>
        <position position="324"/>
    </location>
</feature>
<feature type="modified residue" description="N6,N6,N6-trimethyllysine" evidence="1">
    <location>
        <position position="4"/>
    </location>
</feature>
<feature type="modified residue" description="N6-carboxylysine" evidence="1">
    <location>
        <position position="191"/>
    </location>
</feature>
<feature type="disulfide bond" description="Interchain; in linked form" evidence="1">
    <location>
        <position position="237"/>
    </location>
</feature>
<feature type="non-terminal residue">
    <location>
        <position position="1"/>
    </location>
</feature>
<feature type="non-terminal residue">
    <location>
        <position position="459"/>
    </location>
</feature>
<protein>
    <recommendedName>
        <fullName evidence="1">Ribulose bisphosphate carboxylase large chain</fullName>
        <shortName evidence="1">RuBisCO large subunit</shortName>
        <ecNumber evidence="1">4.1.1.39</ecNumber>
    </recommendedName>
</protein>
<organism>
    <name type="scientific">Nyssa ogeche</name>
    <name type="common">Ogeechee tupelo</name>
    <dbReference type="NCBI Taxonomy" id="16925"/>
    <lineage>
        <taxon>Eukaryota</taxon>
        <taxon>Viridiplantae</taxon>
        <taxon>Streptophyta</taxon>
        <taxon>Embryophyta</taxon>
        <taxon>Tracheophyta</taxon>
        <taxon>Spermatophyta</taxon>
        <taxon>Magnoliopsida</taxon>
        <taxon>eudicotyledons</taxon>
        <taxon>Gunneridae</taxon>
        <taxon>Pentapetalae</taxon>
        <taxon>asterids</taxon>
        <taxon>Cornales</taxon>
        <taxon>Nyssaceae</taxon>
        <taxon>Nyssa</taxon>
    </lineage>
</organism>
<reference key="1">
    <citation type="journal article" date="1992" name="Science">
        <title>Carnivorous plants: phylogeny and structural evolution.</title>
        <authorList>
            <person name="Albert V.A."/>
            <person name="Williams S.E."/>
            <person name="Chase M.W."/>
        </authorList>
    </citation>
    <scope>NUCLEOTIDE SEQUENCE [GENOMIC DNA]</scope>
</reference>
<proteinExistence type="inferred from homology"/>
<name>RBL_NYSOG</name>